<proteinExistence type="evidence at protein level"/>
<sequence length="274" mass="32397">MPFRSNNPITRDELLSRFFPQYHPVTTFNSGLSGGSFLIEHQGQRFVVRQPHDPDAPQSAFLRQYRALSQLPACIAPKPHLYLRDWMVVDYLPGAVKTYLPDTNELAGLLYYLHQQPRFGWRITLLPLLELYWQQSDPARRTVGWLRMLKRLRKAREPRPLRLSPLHMDVHAGNLVHSASGLKLIDWEYAGDGDIALELAAVWVENTEQHRQLVNDYATRAKIYPAQLWRQVRRWFPWLLMLKAGWFEYRWRQTGDQQFIRLADDTWRQLLIKQ</sequence>
<organism>
    <name type="scientific">Escherichia coli (strain K12)</name>
    <dbReference type="NCBI Taxonomy" id="83333"/>
    <lineage>
        <taxon>Bacteria</taxon>
        <taxon>Pseudomonadati</taxon>
        <taxon>Pseudomonadota</taxon>
        <taxon>Gammaproteobacteria</taxon>
        <taxon>Enterobacterales</taxon>
        <taxon>Enterobacteriaceae</taxon>
        <taxon>Escherichia</taxon>
    </lineage>
</organism>
<dbReference type="EC" id="2.7.1.89" evidence="1"/>
<dbReference type="EMBL" id="U00096">
    <property type="protein sequence ID" value="AAC74190.1"/>
    <property type="molecule type" value="Genomic_DNA"/>
</dbReference>
<dbReference type="EMBL" id="AP009048">
    <property type="protein sequence ID" value="BAA35913.1"/>
    <property type="molecule type" value="Genomic_DNA"/>
</dbReference>
<dbReference type="PIR" id="G64854">
    <property type="entry name" value="G64854"/>
</dbReference>
<dbReference type="RefSeq" id="NP_415624.1">
    <property type="nucleotide sequence ID" value="NC_000913.3"/>
</dbReference>
<dbReference type="RefSeq" id="WP_001116592.1">
    <property type="nucleotide sequence ID" value="NZ_SSZK01000019.1"/>
</dbReference>
<dbReference type="SMR" id="P75948"/>
<dbReference type="BioGRID" id="4260073">
    <property type="interactions" value="127"/>
</dbReference>
<dbReference type="FunCoup" id="P75948">
    <property type="interactions" value="60"/>
</dbReference>
<dbReference type="IntAct" id="P75948">
    <property type="interactions" value="5"/>
</dbReference>
<dbReference type="STRING" id="511145.b1106"/>
<dbReference type="PaxDb" id="511145-b1106"/>
<dbReference type="EnsemblBacteria" id="AAC74190">
    <property type="protein sequence ID" value="AAC74190"/>
    <property type="gene ID" value="b1106"/>
</dbReference>
<dbReference type="GeneID" id="75203692"/>
<dbReference type="GeneID" id="948525"/>
<dbReference type="KEGG" id="ecj:JW1092"/>
<dbReference type="KEGG" id="eco:b1106"/>
<dbReference type="KEGG" id="ecoc:C3026_06675"/>
<dbReference type="PATRIC" id="fig|1411691.4.peg.1161"/>
<dbReference type="EchoBASE" id="EB3206"/>
<dbReference type="eggNOG" id="COG0510">
    <property type="taxonomic scope" value="Bacteria"/>
</dbReference>
<dbReference type="HOGENOM" id="CLU_055115_2_1_6"/>
<dbReference type="InParanoid" id="P75948"/>
<dbReference type="OMA" id="LMAGWYE"/>
<dbReference type="OrthoDB" id="179763at2"/>
<dbReference type="PhylomeDB" id="P75948"/>
<dbReference type="BioCyc" id="EcoCyc:THIKIN-MONOMER"/>
<dbReference type="BioCyc" id="MetaCyc:THIKIN-MONOMER"/>
<dbReference type="BRENDA" id="2.7.1.89">
    <property type="organism ID" value="2026"/>
</dbReference>
<dbReference type="UniPathway" id="UPA00060">
    <property type="reaction ID" value="UER00596"/>
</dbReference>
<dbReference type="PRO" id="PR:P75948"/>
<dbReference type="Proteomes" id="UP000000625">
    <property type="component" value="Chromosome"/>
</dbReference>
<dbReference type="GO" id="GO:0005524">
    <property type="term" value="F:ATP binding"/>
    <property type="evidence" value="ECO:0007669"/>
    <property type="project" value="UniProtKB-KW"/>
</dbReference>
<dbReference type="GO" id="GO:0019165">
    <property type="term" value="F:thiamine kinase activity"/>
    <property type="evidence" value="ECO:0000315"/>
    <property type="project" value="EcoCyc"/>
</dbReference>
<dbReference type="GO" id="GO:0009229">
    <property type="term" value="P:thiamine diphosphate biosynthetic process"/>
    <property type="evidence" value="ECO:0007669"/>
    <property type="project" value="UniProtKB-UniRule"/>
</dbReference>
<dbReference type="GO" id="GO:0006772">
    <property type="term" value="P:thiamine metabolic process"/>
    <property type="evidence" value="ECO:0007669"/>
    <property type="project" value="InterPro"/>
</dbReference>
<dbReference type="FunFam" id="3.90.1200.10:FF:000004">
    <property type="entry name" value="Thiamine kinase"/>
    <property type="match status" value="1"/>
</dbReference>
<dbReference type="Gene3D" id="3.90.1200.10">
    <property type="match status" value="1"/>
</dbReference>
<dbReference type="HAMAP" id="MF_01604">
    <property type="entry name" value="Thiamine_kinase"/>
    <property type="match status" value="1"/>
</dbReference>
<dbReference type="InterPro" id="IPR002575">
    <property type="entry name" value="Aminoglycoside_PTrfase"/>
</dbReference>
<dbReference type="InterPro" id="IPR011009">
    <property type="entry name" value="Kinase-like_dom_sf"/>
</dbReference>
<dbReference type="InterPro" id="IPR014093">
    <property type="entry name" value="Thiamine_kinase"/>
</dbReference>
<dbReference type="NCBIfam" id="NF007620">
    <property type="entry name" value="PRK10271.1"/>
    <property type="match status" value="1"/>
</dbReference>
<dbReference type="NCBIfam" id="TIGR02721">
    <property type="entry name" value="ycfN_thiK"/>
    <property type="match status" value="1"/>
</dbReference>
<dbReference type="Pfam" id="PF01636">
    <property type="entry name" value="APH"/>
    <property type="match status" value="1"/>
</dbReference>
<dbReference type="SUPFAM" id="SSF56112">
    <property type="entry name" value="Protein kinase-like (PK-like)"/>
    <property type="match status" value="1"/>
</dbReference>
<accession>P75948</accession>
<reference key="1">
    <citation type="journal article" date="1996" name="DNA Res.">
        <title>A 718-kb DNA sequence of the Escherichia coli K-12 genome corresponding to the 12.7-28.0 min region on the linkage map.</title>
        <authorList>
            <person name="Oshima T."/>
            <person name="Aiba H."/>
            <person name="Baba T."/>
            <person name="Fujita K."/>
            <person name="Hayashi K."/>
            <person name="Honjo A."/>
            <person name="Ikemoto K."/>
            <person name="Inada T."/>
            <person name="Itoh T."/>
            <person name="Kajihara M."/>
            <person name="Kanai K."/>
            <person name="Kashimoto K."/>
            <person name="Kimura S."/>
            <person name="Kitagawa M."/>
            <person name="Makino K."/>
            <person name="Masuda S."/>
            <person name="Miki T."/>
            <person name="Mizobuchi K."/>
            <person name="Mori H."/>
            <person name="Motomura K."/>
            <person name="Nakamura Y."/>
            <person name="Nashimoto H."/>
            <person name="Nishio Y."/>
            <person name="Saito N."/>
            <person name="Sampei G."/>
            <person name="Seki Y."/>
            <person name="Tagami H."/>
            <person name="Takemoto K."/>
            <person name="Wada C."/>
            <person name="Yamamoto Y."/>
            <person name="Yano M."/>
            <person name="Horiuchi T."/>
        </authorList>
    </citation>
    <scope>NUCLEOTIDE SEQUENCE [LARGE SCALE GENOMIC DNA]</scope>
    <source>
        <strain>K12 / W3110 / ATCC 27325 / DSM 5911</strain>
    </source>
</reference>
<reference key="2">
    <citation type="journal article" date="1997" name="Science">
        <title>The complete genome sequence of Escherichia coli K-12.</title>
        <authorList>
            <person name="Blattner F.R."/>
            <person name="Plunkett G. III"/>
            <person name="Bloch C.A."/>
            <person name="Perna N.T."/>
            <person name="Burland V."/>
            <person name="Riley M."/>
            <person name="Collado-Vides J."/>
            <person name="Glasner J.D."/>
            <person name="Rode C.K."/>
            <person name="Mayhew G.F."/>
            <person name="Gregor J."/>
            <person name="Davis N.W."/>
            <person name="Kirkpatrick H.A."/>
            <person name="Goeden M.A."/>
            <person name="Rose D.J."/>
            <person name="Mau B."/>
            <person name="Shao Y."/>
        </authorList>
    </citation>
    <scope>NUCLEOTIDE SEQUENCE [LARGE SCALE GENOMIC DNA]</scope>
    <source>
        <strain>K12 / MG1655 / ATCC 47076</strain>
    </source>
</reference>
<reference key="3">
    <citation type="journal article" date="2006" name="Mol. Syst. Biol.">
        <title>Highly accurate genome sequences of Escherichia coli K-12 strains MG1655 and W3110.</title>
        <authorList>
            <person name="Hayashi K."/>
            <person name="Morooka N."/>
            <person name="Yamamoto Y."/>
            <person name="Fujita K."/>
            <person name="Isono K."/>
            <person name="Choi S."/>
            <person name="Ohtsubo E."/>
            <person name="Baba T."/>
            <person name="Wanner B.L."/>
            <person name="Mori H."/>
            <person name="Horiuchi T."/>
        </authorList>
    </citation>
    <scope>NUCLEOTIDE SEQUENCE [LARGE SCALE GENOMIC DNA]</scope>
    <source>
        <strain>K12 / W3110 / ATCC 27325 / DSM 5911</strain>
    </source>
</reference>
<reference key="4">
    <citation type="journal article" date="2004" name="J. Bacteriol.">
        <title>Identification of the two missing bacterial genes involved in thiamine salvage: thiamine pyrophosphokinase and thiamine kinase.</title>
        <authorList>
            <person name="Melnick J."/>
            <person name="Lis E."/>
            <person name="Park J.-H."/>
            <person name="Kinsland C."/>
            <person name="Mori H."/>
            <person name="Baba T."/>
            <person name="Perkins J."/>
            <person name="Schyns G."/>
            <person name="Vassieva O."/>
            <person name="Osterman A."/>
            <person name="Begley T.P."/>
        </authorList>
    </citation>
    <scope>FUNCTION</scope>
    <scope>CATALYTIC ACTIVITY</scope>
    <scope>PATHWAY</scope>
</reference>
<protein>
    <recommendedName>
        <fullName evidence="2">Thiamine kinase</fullName>
        <ecNumber evidence="1">2.7.1.89</ecNumber>
    </recommendedName>
</protein>
<evidence type="ECO:0000269" key="1">
    <source>
    </source>
</evidence>
<evidence type="ECO:0000303" key="2">
    <source>
    </source>
</evidence>
<evidence type="ECO:0000305" key="3"/>
<evidence type="ECO:0000305" key="4">
    <source>
    </source>
</evidence>
<feature type="chain" id="PRO_0000218057" description="Thiamine kinase">
    <location>
        <begin position="1"/>
        <end position="274"/>
    </location>
</feature>
<gene>
    <name evidence="2" type="primary">thiK</name>
    <name evidence="2" type="synonym">ycfN</name>
    <name type="ordered locus">b1106</name>
    <name type="ordered locus">JW1092</name>
</gene>
<comment type="function">
    <text evidence="1">Catalyzes the ATP-dependent phosphorylation of thiamine to thiamine phosphate. Is involved in thiamine salvage.</text>
</comment>
<comment type="catalytic activity">
    <reaction evidence="1">
        <text>thiamine + ATP = thiamine phosphate + ADP + H(+)</text>
        <dbReference type="Rhea" id="RHEA:12012"/>
        <dbReference type="ChEBI" id="CHEBI:15378"/>
        <dbReference type="ChEBI" id="CHEBI:18385"/>
        <dbReference type="ChEBI" id="CHEBI:30616"/>
        <dbReference type="ChEBI" id="CHEBI:37575"/>
        <dbReference type="ChEBI" id="CHEBI:456216"/>
        <dbReference type="EC" id="2.7.1.89"/>
    </reaction>
    <physiologicalReaction direction="left-to-right" evidence="4">
        <dbReference type="Rhea" id="RHEA:12013"/>
    </physiologicalReaction>
</comment>
<comment type="pathway">
    <text evidence="1">Cofactor biosynthesis; thiamine diphosphate biosynthesis; thiamine phosphate from thiamine: step 1/1.</text>
</comment>
<comment type="similarity">
    <text evidence="3">Belongs to the thiamine kinase family.</text>
</comment>
<name>THIK_ECOLI</name>
<keyword id="KW-0067">ATP-binding</keyword>
<keyword id="KW-0418">Kinase</keyword>
<keyword id="KW-0547">Nucleotide-binding</keyword>
<keyword id="KW-1185">Reference proteome</keyword>
<keyword id="KW-0808">Transferase</keyword>